<protein>
    <recommendedName>
        <fullName evidence="1">Heme A synthase</fullName>
        <shortName evidence="1 3">HAS</shortName>
        <ecNumber evidence="1">1.17.99.9</ecNumber>
    </recommendedName>
    <alternativeName>
        <fullName evidence="1">Cytochrome aa3-controlling protein</fullName>
    </alternativeName>
</protein>
<comment type="function">
    <text evidence="1 2">Catalyzes the conversion of heme O to heme A by two successive hydroxylations of the methyl group at C8. The first hydroxylation forms heme I, the second hydroxylation results in an unstable dihydroxymethyl group, which spontaneously dehydrates, resulting in the formyl group of heme A.</text>
</comment>
<comment type="catalytic activity">
    <reaction evidence="1">
        <text>Fe(II)-heme o + 2 A + H2O = Fe(II)-heme a + 2 AH2</text>
        <dbReference type="Rhea" id="RHEA:63388"/>
        <dbReference type="ChEBI" id="CHEBI:13193"/>
        <dbReference type="ChEBI" id="CHEBI:15377"/>
        <dbReference type="ChEBI" id="CHEBI:17499"/>
        <dbReference type="ChEBI" id="CHEBI:60530"/>
        <dbReference type="ChEBI" id="CHEBI:61715"/>
        <dbReference type="EC" id="1.17.99.9"/>
    </reaction>
    <physiologicalReaction direction="left-to-right" evidence="1">
        <dbReference type="Rhea" id="RHEA:63389"/>
    </physiologicalReaction>
</comment>
<comment type="cofactor">
    <cofactor evidence="1">
        <name>heme b</name>
        <dbReference type="ChEBI" id="CHEBI:60344"/>
    </cofactor>
</comment>
<comment type="pathway">
    <text evidence="1">Porphyrin-containing compound metabolism; heme A biosynthesis; heme A from heme O: step 1/1.</text>
</comment>
<comment type="subunit">
    <text evidence="1 2">Interacts with CtaB.</text>
</comment>
<comment type="subcellular location">
    <subcellularLocation>
        <location evidence="1 4">Cell membrane</location>
        <topology evidence="1 4">Multi-pass membrane protein</topology>
    </subcellularLocation>
</comment>
<comment type="similarity">
    <text evidence="1 4">Belongs to the COX15/CtaA family. Type 2 subfamily.</text>
</comment>
<feature type="chain" id="PRO_0000344245" description="Heme A synthase">
    <location>
        <begin position="1"/>
        <end position="391"/>
    </location>
</feature>
<feature type="transmembrane region" description="Helical" evidence="1">
    <location>
        <begin position="37"/>
        <end position="57"/>
    </location>
</feature>
<feature type="transmembrane region" description="Helical" evidence="1">
    <location>
        <begin position="121"/>
        <end position="141"/>
    </location>
</feature>
<feature type="transmembrane region" description="Helical" evidence="1">
    <location>
        <begin position="152"/>
        <end position="172"/>
    </location>
</feature>
<feature type="transmembrane region" description="Helical" evidence="1">
    <location>
        <begin position="186"/>
        <end position="206"/>
    </location>
</feature>
<feature type="transmembrane region" description="Helical" evidence="1">
    <location>
        <begin position="229"/>
        <end position="249"/>
    </location>
</feature>
<feature type="transmembrane region" description="Helical" evidence="1">
    <location>
        <begin position="298"/>
        <end position="318"/>
    </location>
</feature>
<feature type="transmembrane region" description="Helical" evidence="1">
    <location>
        <begin position="332"/>
        <end position="352"/>
    </location>
</feature>
<feature type="transmembrane region" description="Helical" evidence="1">
    <location>
        <begin position="354"/>
        <end position="374"/>
    </location>
</feature>
<feature type="binding site" description="axial binding residue" evidence="1">
    <location>
        <position position="300"/>
    </location>
    <ligand>
        <name>heme</name>
        <dbReference type="ChEBI" id="CHEBI:30413"/>
    </ligand>
    <ligandPart>
        <name>Fe</name>
        <dbReference type="ChEBI" id="CHEBI:18248"/>
    </ligandPart>
</feature>
<feature type="binding site" description="axial binding residue" evidence="1">
    <location>
        <position position="360"/>
    </location>
    <ligand>
        <name>heme</name>
        <dbReference type="ChEBI" id="CHEBI:30413"/>
    </ligand>
    <ligandPart>
        <name>Fe</name>
        <dbReference type="ChEBI" id="CHEBI:18248"/>
    </ligandPart>
</feature>
<name>CTAA_CERS4</name>
<organism>
    <name type="scientific">Cereibacter sphaeroides (strain ATCC 17023 / DSM 158 / JCM 6121 / CCUG 31486 / LMG 2827 / NBRC 12203 / NCIMB 8253 / ATH 2.4.1.)</name>
    <name type="common">Rhodobacter sphaeroides</name>
    <dbReference type="NCBI Taxonomy" id="272943"/>
    <lineage>
        <taxon>Bacteria</taxon>
        <taxon>Pseudomonadati</taxon>
        <taxon>Pseudomonadota</taxon>
        <taxon>Alphaproteobacteria</taxon>
        <taxon>Rhodobacterales</taxon>
        <taxon>Paracoccaceae</taxon>
        <taxon>Cereibacter</taxon>
    </lineage>
</organism>
<accession>Q3IXW9</accession>
<accession>Q66LN8</accession>
<proteinExistence type="evidence at protein level"/>
<sequence>MAVKKRSIFEEVGQGAKAPVPQGGSIDRGHGGARRGIRLWLMALFLLVMAMIVVGGLTRLTDSGLSITEWRPVTGAVPPLNETQWAAEFDKYRDSPQYRLMNAGMTLAEFQRIYWWEWGHRQLGRVIGLVWAVGFLGFLAARRIPRGWWPRLLALGALGGLQGGIGWWMVASGLEGDKVTVESTRLATHLGLAFIILGLIAWQALLLGRSESDLLQARRQKDGRLVTLTTVLIGVAFLQIVLGALVAGIDAGRGFPTWPDMNGTFLPAEMFYVPGVETDWRNPAWWLGLLQNPGFVQFLHRMAGYTLAALGLIFWIFGRRSRHRATRGAFDLLAMALLAQILLGVGTVLSAAEWQVAIAHQVGAVVIWVLILHARHLALYPRVGSIRKGTL</sequence>
<keyword id="KW-1003">Cell membrane</keyword>
<keyword id="KW-0350">Heme biosynthesis</keyword>
<keyword id="KW-0408">Iron</keyword>
<keyword id="KW-0472">Membrane</keyword>
<keyword id="KW-0479">Metal-binding</keyword>
<keyword id="KW-0560">Oxidoreductase</keyword>
<keyword id="KW-1185">Reference proteome</keyword>
<keyword id="KW-0812">Transmembrane</keyword>
<keyword id="KW-1133">Transmembrane helix</keyword>
<reference key="1">
    <citation type="journal article" date="2004" name="Biochemistry">
        <title>Heme O synthase and heme A synthase from Bacillus subtilis and Rhodobacter sphaeroides interact in Escherichia coli.</title>
        <authorList>
            <person name="Brown B.M."/>
            <person name="Wang Z."/>
            <person name="Brown K.R."/>
            <person name="Cricco J.A."/>
            <person name="Hegg E.L."/>
        </authorList>
    </citation>
    <scope>NUCLEOTIDE SEQUENCE [GENOMIC DNA]</scope>
    <scope>FUNCTION</scope>
    <scope>INTERACTION WITH CTAB</scope>
</reference>
<reference key="2">
    <citation type="submission" date="2005-09" db="EMBL/GenBank/DDBJ databases">
        <title>Complete sequence of chromosome 2 of Rhodobacter sphaeroides 2.4.1.</title>
        <authorList>
            <person name="Copeland A."/>
            <person name="Lucas S."/>
            <person name="Lapidus A."/>
            <person name="Barry K."/>
            <person name="Detter J.C."/>
            <person name="Glavina T."/>
            <person name="Hammon N."/>
            <person name="Israni S."/>
            <person name="Pitluck S."/>
            <person name="Richardson P."/>
            <person name="Mackenzie C."/>
            <person name="Choudhary M."/>
            <person name="Larimer F."/>
            <person name="Hauser L.J."/>
            <person name="Land M."/>
            <person name="Donohue T.J."/>
            <person name="Kaplan S."/>
        </authorList>
    </citation>
    <scope>NUCLEOTIDE SEQUENCE [LARGE SCALE GENOMIC DNA]</scope>
    <source>
        <strain>ATCC 17023 / DSM 158 / JCM 6121 / CCUG 31486 / LMG 2827 / NBRC 12203 / NCIMB 8253 / ATH 2.4.1.</strain>
    </source>
</reference>
<gene>
    <name evidence="1" type="primary">ctaA</name>
    <name evidence="3" type="synonym">cox15</name>
    <name type="ordered locus">RHOS4_30470</name>
    <name type="ordered locus">RSP_3831</name>
</gene>
<evidence type="ECO:0000255" key="1">
    <source>
        <dbReference type="HAMAP-Rule" id="MF_01665"/>
    </source>
</evidence>
<evidence type="ECO:0000269" key="2">
    <source>
    </source>
</evidence>
<evidence type="ECO:0000303" key="3">
    <source>
    </source>
</evidence>
<evidence type="ECO:0000305" key="4"/>
<dbReference type="EC" id="1.17.99.9" evidence="1"/>
<dbReference type="EMBL" id="AY692269">
    <property type="protein sequence ID" value="AAU04881.1"/>
    <property type="molecule type" value="Genomic_DNA"/>
</dbReference>
<dbReference type="EMBL" id="CP000144">
    <property type="protein sequence ID" value="ABA80615.1"/>
    <property type="molecule type" value="Genomic_DNA"/>
</dbReference>
<dbReference type="RefSeq" id="WP_011338957.1">
    <property type="nucleotide sequence ID" value="NC_007494.2"/>
</dbReference>
<dbReference type="RefSeq" id="YP_354516.1">
    <property type="nucleotide sequence ID" value="NC_007494.2"/>
</dbReference>
<dbReference type="SMR" id="Q3IXW9"/>
<dbReference type="IntAct" id="Q3IXW9">
    <property type="interactions" value="1"/>
</dbReference>
<dbReference type="STRING" id="272943.RSP_3831"/>
<dbReference type="EnsemblBacteria" id="ABA80615">
    <property type="protein sequence ID" value="ABA80615"/>
    <property type="gene ID" value="RSP_3831"/>
</dbReference>
<dbReference type="GeneID" id="3721413"/>
<dbReference type="KEGG" id="rsp:RSP_3831"/>
<dbReference type="PATRIC" id="fig|272943.9.peg.3418"/>
<dbReference type="eggNOG" id="COG1612">
    <property type="taxonomic scope" value="Bacteria"/>
</dbReference>
<dbReference type="OrthoDB" id="9793156at2"/>
<dbReference type="PhylomeDB" id="Q3IXW9"/>
<dbReference type="BRENDA" id="1.17.99.9">
    <property type="organism ID" value="5383"/>
</dbReference>
<dbReference type="UniPathway" id="UPA00269">
    <property type="reaction ID" value="UER00713"/>
</dbReference>
<dbReference type="Proteomes" id="UP000002703">
    <property type="component" value="Chromosome 2"/>
</dbReference>
<dbReference type="GO" id="GO:0005886">
    <property type="term" value="C:plasma membrane"/>
    <property type="evidence" value="ECO:0007669"/>
    <property type="project" value="UniProtKB-SubCell"/>
</dbReference>
<dbReference type="GO" id="GO:0046872">
    <property type="term" value="F:metal ion binding"/>
    <property type="evidence" value="ECO:0007669"/>
    <property type="project" value="UniProtKB-KW"/>
</dbReference>
<dbReference type="GO" id="GO:0016653">
    <property type="term" value="F:oxidoreductase activity, acting on NAD(P)H, heme protein as acceptor"/>
    <property type="evidence" value="ECO:0007669"/>
    <property type="project" value="InterPro"/>
</dbReference>
<dbReference type="GO" id="GO:0006784">
    <property type="term" value="P:heme A biosynthetic process"/>
    <property type="evidence" value="ECO:0007669"/>
    <property type="project" value="UniProtKB-UniRule"/>
</dbReference>
<dbReference type="HAMAP" id="MF_01665">
    <property type="entry name" value="HemeA_synth_type2"/>
    <property type="match status" value="1"/>
</dbReference>
<dbReference type="InterPro" id="IPR003780">
    <property type="entry name" value="COX15/CtaA_fam"/>
</dbReference>
<dbReference type="InterPro" id="IPR054616">
    <property type="entry name" value="HemA_synt_rhodobact"/>
</dbReference>
<dbReference type="InterPro" id="IPR023754">
    <property type="entry name" value="HemeA_Synthase_type2"/>
</dbReference>
<dbReference type="NCBIfam" id="NF045570">
    <property type="entry name" value="HemSynCtaAAlphapr"/>
    <property type="match status" value="1"/>
</dbReference>
<dbReference type="PANTHER" id="PTHR23289">
    <property type="entry name" value="CYTOCHROME C OXIDASE ASSEMBLY PROTEIN COX15"/>
    <property type="match status" value="1"/>
</dbReference>
<dbReference type="PANTHER" id="PTHR23289:SF2">
    <property type="entry name" value="CYTOCHROME C OXIDASE ASSEMBLY PROTEIN COX15 HOMOLOG"/>
    <property type="match status" value="1"/>
</dbReference>
<dbReference type="Pfam" id="PF02628">
    <property type="entry name" value="COX15-CtaA"/>
    <property type="match status" value="1"/>
</dbReference>